<accession>Q7VSE8</accession>
<reference key="1">
    <citation type="journal article" date="2003" name="Nat. Genet.">
        <title>Comparative analysis of the genome sequences of Bordetella pertussis, Bordetella parapertussis and Bordetella bronchiseptica.</title>
        <authorList>
            <person name="Parkhill J."/>
            <person name="Sebaihia M."/>
            <person name="Preston A."/>
            <person name="Murphy L.D."/>
            <person name="Thomson N.R."/>
            <person name="Harris D.E."/>
            <person name="Holden M.T.G."/>
            <person name="Churcher C.M."/>
            <person name="Bentley S.D."/>
            <person name="Mungall K.L."/>
            <person name="Cerdeno-Tarraga A.-M."/>
            <person name="Temple L."/>
            <person name="James K.D."/>
            <person name="Harris B."/>
            <person name="Quail M.A."/>
            <person name="Achtman M."/>
            <person name="Atkin R."/>
            <person name="Baker S."/>
            <person name="Basham D."/>
            <person name="Bason N."/>
            <person name="Cherevach I."/>
            <person name="Chillingworth T."/>
            <person name="Collins M."/>
            <person name="Cronin A."/>
            <person name="Davis P."/>
            <person name="Doggett J."/>
            <person name="Feltwell T."/>
            <person name="Goble A."/>
            <person name="Hamlin N."/>
            <person name="Hauser H."/>
            <person name="Holroyd S."/>
            <person name="Jagels K."/>
            <person name="Leather S."/>
            <person name="Moule S."/>
            <person name="Norberczak H."/>
            <person name="O'Neil S."/>
            <person name="Ormond D."/>
            <person name="Price C."/>
            <person name="Rabbinowitsch E."/>
            <person name="Rutter S."/>
            <person name="Sanders M."/>
            <person name="Saunders D."/>
            <person name="Seeger K."/>
            <person name="Sharp S."/>
            <person name="Simmonds M."/>
            <person name="Skelton J."/>
            <person name="Squares R."/>
            <person name="Squares S."/>
            <person name="Stevens K."/>
            <person name="Unwin L."/>
            <person name="Whitehead S."/>
            <person name="Barrell B.G."/>
            <person name="Maskell D.J."/>
        </authorList>
    </citation>
    <scope>NUCLEOTIDE SEQUENCE [LARGE SCALE GENOMIC DNA]</scope>
    <source>
        <strain>Tohama I / ATCC BAA-589 / NCTC 13251</strain>
    </source>
</reference>
<comment type="function">
    <text evidence="1">Part of the MsrPQ system that repairs oxidized periplasmic proteins containing methionine sulfoxide residues (Met-O), using respiratory chain electrons. Thus protects these proteins from oxidative-stress damage caused by reactive species of oxygen and chlorine generated by the host defense mechanisms. MsrPQ is essential for the maintenance of envelope integrity under bleach stress, rescuing a wide series of structurally unrelated periplasmic proteins from methionine oxidation. MsrQ provides electrons for reduction to the reductase catalytic subunit MsrP, using the quinone pool of the respiratory chain.</text>
</comment>
<comment type="cofactor">
    <cofactor evidence="1">
        <name>FMN</name>
        <dbReference type="ChEBI" id="CHEBI:58210"/>
    </cofactor>
    <text evidence="1">Binds 1 FMN per subunit.</text>
</comment>
<comment type="cofactor">
    <cofactor evidence="1">
        <name>heme b</name>
        <dbReference type="ChEBI" id="CHEBI:60344"/>
    </cofactor>
    <text evidence="1">Binds 1 heme b (iron(II)-protoporphyrin IX) group per subunit.</text>
</comment>
<comment type="subunit">
    <text evidence="1">Heterodimer of a catalytic subunit (MsrP) and a heme-binding subunit (MsrQ).</text>
</comment>
<comment type="subcellular location">
    <subcellularLocation>
        <location evidence="1">Cell inner membrane</location>
        <topology evidence="1">Multi-pass membrane protein</topology>
    </subcellularLocation>
</comment>
<comment type="similarity">
    <text evidence="1">Belongs to the MsrQ family.</text>
</comment>
<organism>
    <name type="scientific">Bordetella pertussis (strain Tohama I / ATCC BAA-589 / NCTC 13251)</name>
    <dbReference type="NCBI Taxonomy" id="257313"/>
    <lineage>
        <taxon>Bacteria</taxon>
        <taxon>Pseudomonadati</taxon>
        <taxon>Pseudomonadota</taxon>
        <taxon>Betaproteobacteria</taxon>
        <taxon>Burkholderiales</taxon>
        <taxon>Alcaligenaceae</taxon>
        <taxon>Bordetella</taxon>
    </lineage>
</organism>
<sequence length="206" mass="23240">MPAAPLTARAIGRIKPLLFVAGLLPFARWFWLGANDGLSANPVEFLTRSSGTWTLVCLLVTLAITPLRRLTGQPALVRLRRMCGLFAFFYGSLHFLAWVWWDRGLDPVSMLQDVGERPFITVGFAAFVLMAALAATSTQWAMRKLGKRWQTLHRAVYAIGLLAILHFWWHKAGKNDLQQPLLYGSVLALLLGWRVAAWWRRRGAAR</sequence>
<dbReference type="EMBL" id="BX640412">
    <property type="protein sequence ID" value="CAE44809.1"/>
    <property type="molecule type" value="Genomic_DNA"/>
</dbReference>
<dbReference type="RefSeq" id="NP_879335.1">
    <property type="nucleotide sequence ID" value="NC_002929.2"/>
</dbReference>
<dbReference type="SMR" id="Q7VSE8"/>
<dbReference type="STRING" id="257313.BP0480"/>
<dbReference type="PaxDb" id="257313-BP0480"/>
<dbReference type="KEGG" id="bpe:BP0480"/>
<dbReference type="PATRIC" id="fig|257313.5.peg.518"/>
<dbReference type="eggNOG" id="COG2717">
    <property type="taxonomic scope" value="Bacteria"/>
</dbReference>
<dbReference type="HOGENOM" id="CLU_080662_0_1_4"/>
<dbReference type="Proteomes" id="UP000002676">
    <property type="component" value="Chromosome"/>
</dbReference>
<dbReference type="GO" id="GO:0005886">
    <property type="term" value="C:plasma membrane"/>
    <property type="evidence" value="ECO:0007669"/>
    <property type="project" value="UniProtKB-SubCell"/>
</dbReference>
<dbReference type="GO" id="GO:0009055">
    <property type="term" value="F:electron transfer activity"/>
    <property type="evidence" value="ECO:0007669"/>
    <property type="project" value="UniProtKB-UniRule"/>
</dbReference>
<dbReference type="GO" id="GO:0010181">
    <property type="term" value="F:FMN binding"/>
    <property type="evidence" value="ECO:0007669"/>
    <property type="project" value="UniProtKB-UniRule"/>
</dbReference>
<dbReference type="GO" id="GO:0020037">
    <property type="term" value="F:heme binding"/>
    <property type="evidence" value="ECO:0007669"/>
    <property type="project" value="UniProtKB-UniRule"/>
</dbReference>
<dbReference type="GO" id="GO:0046872">
    <property type="term" value="F:metal ion binding"/>
    <property type="evidence" value="ECO:0007669"/>
    <property type="project" value="UniProtKB-KW"/>
</dbReference>
<dbReference type="GO" id="GO:0016679">
    <property type="term" value="F:oxidoreductase activity, acting on diphenols and related substances as donors"/>
    <property type="evidence" value="ECO:0007669"/>
    <property type="project" value="TreeGrafter"/>
</dbReference>
<dbReference type="GO" id="GO:0030091">
    <property type="term" value="P:protein repair"/>
    <property type="evidence" value="ECO:0007669"/>
    <property type="project" value="UniProtKB-UniRule"/>
</dbReference>
<dbReference type="HAMAP" id="MF_01207">
    <property type="entry name" value="MsrQ"/>
    <property type="match status" value="1"/>
</dbReference>
<dbReference type="InterPro" id="IPR013130">
    <property type="entry name" value="Fe3_Rdtase_TM_dom"/>
</dbReference>
<dbReference type="InterPro" id="IPR022837">
    <property type="entry name" value="MsrQ-like"/>
</dbReference>
<dbReference type="NCBIfam" id="NF003836">
    <property type="entry name" value="PRK05419.2-3"/>
    <property type="match status" value="1"/>
</dbReference>
<dbReference type="PANTHER" id="PTHR36964">
    <property type="entry name" value="PROTEIN-METHIONINE-SULFOXIDE REDUCTASE HEME-BINDING SUBUNIT MSRQ"/>
    <property type="match status" value="1"/>
</dbReference>
<dbReference type="PANTHER" id="PTHR36964:SF1">
    <property type="entry name" value="PROTEIN-METHIONINE-SULFOXIDE REDUCTASE HEME-BINDING SUBUNIT MSRQ"/>
    <property type="match status" value="1"/>
</dbReference>
<dbReference type="Pfam" id="PF01794">
    <property type="entry name" value="Ferric_reduct"/>
    <property type="match status" value="1"/>
</dbReference>
<proteinExistence type="inferred from homology"/>
<evidence type="ECO:0000255" key="1">
    <source>
        <dbReference type="HAMAP-Rule" id="MF_01207"/>
    </source>
</evidence>
<protein>
    <recommendedName>
        <fullName evidence="1">Protein-methionine-sulfoxide reductase heme-binding subunit MsrQ</fullName>
    </recommendedName>
    <alternativeName>
        <fullName evidence="1">Flavocytochrome MsrQ</fullName>
    </alternativeName>
</protein>
<gene>
    <name evidence="1" type="primary">msrQ</name>
    <name type="ordered locus">BP0480</name>
</gene>
<name>MSRQ_BORPE</name>
<keyword id="KW-0997">Cell inner membrane</keyword>
<keyword id="KW-1003">Cell membrane</keyword>
<keyword id="KW-0249">Electron transport</keyword>
<keyword id="KW-0285">Flavoprotein</keyword>
<keyword id="KW-0288">FMN</keyword>
<keyword id="KW-0349">Heme</keyword>
<keyword id="KW-0408">Iron</keyword>
<keyword id="KW-0472">Membrane</keyword>
<keyword id="KW-0479">Metal-binding</keyword>
<keyword id="KW-1185">Reference proteome</keyword>
<keyword id="KW-0812">Transmembrane</keyword>
<keyword id="KW-1133">Transmembrane helix</keyword>
<keyword id="KW-0813">Transport</keyword>
<feature type="chain" id="PRO_0000091569" description="Protein-methionine-sulfoxide reductase heme-binding subunit MsrQ">
    <location>
        <begin position="1"/>
        <end position="206"/>
    </location>
</feature>
<feature type="transmembrane region" description="Helical" evidence="1">
    <location>
        <begin position="14"/>
        <end position="34"/>
    </location>
</feature>
<feature type="transmembrane region" description="Helical" evidence="1">
    <location>
        <begin position="45"/>
        <end position="65"/>
    </location>
</feature>
<feature type="transmembrane region" description="Helical" evidence="1">
    <location>
        <begin position="82"/>
        <end position="102"/>
    </location>
</feature>
<feature type="transmembrane region" description="Helical" evidence="1">
    <location>
        <begin position="118"/>
        <end position="138"/>
    </location>
</feature>
<feature type="transmembrane region" description="Helical" evidence="1">
    <location>
        <begin position="149"/>
        <end position="169"/>
    </location>
</feature>
<feature type="transmembrane region" description="Helical" evidence="1">
    <location>
        <begin position="179"/>
        <end position="199"/>
    </location>
</feature>